<gene>
    <name type="primary">nef</name>
</gene>
<sequence length="9" mass="967">MGGKWSKSS</sequence>
<organism>
    <name type="scientific">Human immunodeficiency virus type 1 group M subtype D (isolate Z84)</name>
    <name type="common">HIV-1</name>
    <dbReference type="NCBI Taxonomy" id="11681"/>
    <lineage>
        <taxon>Viruses</taxon>
        <taxon>Riboviria</taxon>
        <taxon>Pararnavirae</taxon>
        <taxon>Artverviricota</taxon>
        <taxon>Revtraviricetes</taxon>
        <taxon>Ortervirales</taxon>
        <taxon>Retroviridae</taxon>
        <taxon>Orthoretrovirinae</taxon>
        <taxon>Lentivirus</taxon>
        <taxon>Human immunodeficiency virus type 1</taxon>
    </lineage>
</organism>
<comment type="function">
    <text evidence="1">Factor of infectivity and pathogenicity, required for optimal virus replication. Alters numerous pathways of T-lymphocyte function and down-regulates immunity surface molecules in order to evade host defense and increase viral infectivity. Alters the functionality of other immunity cells, like dendritic cells, monocytes/macrophages and NK cells. One of the earliest and most abundantly expressed viral proteins (By similarity).</text>
</comment>
<comment type="function">
    <text evidence="1">In infected CD4(+) T-lymphocytes, down-regulates the surface MHC-I, mature MHC-II, CD4, CD28, CCR5 and CXCR4 molecules. Mediates internalization and degradation of host CD4 through the interaction of with the cytoplasmic tail of CD4, the recruitment of AP-2 (clathrin adapter protein complex 2), internalization through clathrin coated pits, and subsequent transport to endosomes and lysosomes for degradation. Diverts host MHC-I molecules to the trans-Golgi network-associated endosomal compartments by an endocytic pathway to finally target them for degradation. MHC-I down-regulation may involve AP-1 (clathrin adapter protein complex 1) or possibly Src family kinase-ZAP70/Syk-PI3K cascade recruited by PACS2. In consequence infected cells are masked for immune recognition by cytotoxic T-lymphocytes. Decreasing the number of immune receptors also prevents reinfection by more HIV particles (superinfection) (By similarity).</text>
</comment>
<comment type="function">
    <text evidence="1">Bypasses host T-cell signaling by inducing a transcriptional program nearly identical to that of anti-CD3 cell activation. Interaction with TCR-zeta chain up-regulates the Fas ligand (FasL). Increasing surface FasL molecules and decreasing surface MHC-I molecules on infected CD4(+) cells send attacking cytotoxic CD8+ T-lymphocytes into apoptosis (By similarity).</text>
</comment>
<comment type="function">
    <text evidence="1">Plays a role in optimizing the host cell environment for viral replication without causing cell death by apoptosis. Protects the infected cells from apoptosis in order to keep them alive until the next virus generation is ready to strike. Inhibits the Fas and TNFR-mediated death signals by blocking MAP3K5. Interacts and decreases the half-life of p53, protecting the infected cell against p53-mediated apoptosis. Inhibits the apoptotic signals regulated by the Bcl-2 family proteins through the formation of a Nef/PI3-kinase/PAK2 complex that leads to activation of PAK2 and induces phosphorylation of Bad (By similarity).</text>
</comment>
<comment type="function">
    <text evidence="1">Extracellular Nef protein targets CD4(+) T-lymphocytes for apoptosis by interacting with CXCR4 surface receptors.</text>
</comment>
<comment type="subunit">
    <text evidence="1">Homodimer (By similarity). Interacts with Nef associated p21-activated kinase (PAK2); this interaction activates PAK2. Associates with the Nef-MHC-I-AP1 complex; this complex is required for MHC-I internalization. Interacts (via C-terminus) with host PI3-kinase (via C-terminus). Interacts with host PACS1; this interaction seems to be weak. Interacts with host PACS2. Interacts with host LCK and MAPK3; these interactions inhibit the kinase activity of the latter. Interacts with host ATP6V1H; this interaction may play a role in CD4 endocytosis. Associates with the CD4-Nef-AP2 complex; this complex is required for CD4 internalization. Interacts with TCR-zeta chain; this interaction up-regulates the Fas ligand (FasL) surface expression. Interacts with various cellular proteins including MAP3K5, beta-COP, HCK, and PTE1. Interacts with human RACK1; this increases Nef phosphorylation by PKC (By similarity).</text>
</comment>
<comment type="subcellular location">
    <subcellularLocation>
        <location evidence="1">Host cell membrane</location>
        <topology evidence="1">Lipid-anchor</topology>
        <orientation evidence="1">Cytoplasmic side</orientation>
    </subcellularLocation>
    <subcellularLocation>
        <location evidence="1">Host cytoplasm</location>
        <location evidence="1">Host perinuclear region</location>
    </subcellularLocation>
    <subcellularLocation>
        <location evidence="1">Virion</location>
    </subcellularLocation>
    <subcellularLocation>
        <location evidence="1">Secreted</location>
    </subcellularLocation>
    <text evidence="1">Predominantly found in the paranuclear area, probably in the TGN. Correct localization requires PACS1. Also associates with the inner plasma membrane through its N-terminal domain. Nef stimulates its own export via the release of exosomes. Also incorporated in virions at a rate of about 10 molecules per virion, where it is cleaved (By similarity).</text>
</comment>
<comment type="domain">
    <text evidence="1">The N-terminal domain is composed of the N-myristoyl glycine and of a cluster of positively charged amino acids. It is required for inner plasma membrane targeting of Nef and virion incorporation, and thereby for infectivity. This domain is also involved in binding to p53 (By similarity).</text>
</comment>
<comment type="domain">
    <text evidence="1">The SH3-binding domain constituted of PxxP motifs mediates binding to several Src family proteins thereby regulating their tyrosine kinase activity. The same motifs also mediates the association with MAPK3, PI3-kinase and TCR-zeta (By similarity).</text>
</comment>
<comment type="domain">
    <text evidence="1">The di-leucine internalization motif and a diacidic motif seem to be required for binding to AP-2.</text>
</comment>
<comment type="domain">
    <text evidence="1">The acidic region may play a stabilizing role in the formation of a ternary complex between Nef, the MHC-I cytoplasmic domain, and AP1M1.</text>
</comment>
<comment type="PTM">
    <text evidence="1">The virion-associated Nef proteins are cleaved by the viral protease to release the soluble C-terminal core protein. Nef is probably cleaved concomitantly with viral structural proteins on maturation of virus particles (By similarity).</text>
</comment>
<comment type="PTM">
    <text evidence="1">Phosphorylated on serine residues, probably by host PKC.</text>
</comment>
<comment type="miscellaneous">
    <text>The Z-84 isolate was taken from a 54 year-old Zairean male.</text>
</comment>
<comment type="miscellaneous">
    <text>HIV-1 lineages are divided in three main groups, M (for Major), O (for Outlier), and N (for New, or Non-M, Non-O). The vast majority of strains found worldwide belong to the group M. Group O seems to be endemic to and largely confined to Cameroon and neighboring countries in West Central Africa, where these viruses represent a small minority of HIV-1 strains. The group N is represented by a limited number of isolates from Cameroonian persons. The group M is further subdivided in 9 clades or subtypes (A to D, F to H, J and K).</text>
</comment>
<comment type="similarity">
    <text evidence="2">Belongs to the lentivirus primate group Nef protein family.</text>
</comment>
<feature type="initiator methionine" description="Removed; by host" evidence="1">
    <location>
        <position position="1"/>
    </location>
</feature>
<feature type="chain" id="PRO_0000085227" description="Protein Nef">
    <location>
        <begin position="2"/>
        <end position="9" status="greater than"/>
    </location>
</feature>
<feature type="region of interest" description="N-terminal; associates with the host plasma membrane" evidence="1">
    <location>
        <begin position="2"/>
        <end position="9" status="greater than"/>
    </location>
</feature>
<feature type="lipid moiety-binding region" description="N-myristoyl glycine; by host" evidence="1">
    <location>
        <position position="2"/>
    </location>
</feature>
<feature type="non-terminal residue">
    <location>
        <position position="9"/>
    </location>
</feature>
<reference key="1">
    <citation type="journal article" date="1988" name="AIDS Res. Hum. Retroviruses">
        <title>Nucleotide sequence analysis of the env gene of a new Zairian isolate of HIV-1.</title>
        <authorList>
            <person name="Yourno J."/>
            <person name="Josephs S.F."/>
            <person name="Reitz M.S. Jr."/>
            <person name="Zagury D."/>
            <person name="Wong-Staal F."/>
            <person name="Gallo R.C."/>
        </authorList>
    </citation>
    <scope>NUCLEOTIDE SEQUENCE [GENOMIC RNA]</scope>
</reference>
<proteinExistence type="inferred from homology"/>
<name>NEF_HV1Z8</name>
<organismHost>
    <name type="scientific">Homo sapiens</name>
    <name type="common">Human</name>
    <dbReference type="NCBI Taxonomy" id="9606"/>
</organismHost>
<protein>
    <recommendedName>
        <fullName>Protein Nef</fullName>
    </recommendedName>
    <alternativeName>
        <fullName>3'ORF</fullName>
    </alternativeName>
    <alternativeName>
        <fullName>Negative factor</fullName>
        <shortName>F-protein</shortName>
    </alternativeName>
</protein>
<keyword id="KW-0014">AIDS</keyword>
<keyword id="KW-0053">Apoptosis</keyword>
<keyword id="KW-0244">Early protein</keyword>
<keyword id="KW-1032">Host cell membrane</keyword>
<keyword id="KW-1035">Host cytoplasm</keyword>
<keyword id="KW-1043">Host membrane</keyword>
<keyword id="KW-0945">Host-virus interaction</keyword>
<keyword id="KW-0449">Lipoprotein</keyword>
<keyword id="KW-0472">Membrane</keyword>
<keyword id="KW-0519">Myristate</keyword>
<keyword id="KW-0597">Phosphoprotein</keyword>
<keyword id="KW-0964">Secreted</keyword>
<keyword id="KW-0899">Viral immunoevasion</keyword>
<keyword id="KW-0946">Virion</keyword>
<keyword id="KW-0843">Virulence</keyword>
<dbReference type="EMBL" id="J03653">
    <property type="protein sequence ID" value="AAA44687.1"/>
    <property type="molecule type" value="Genomic_RNA"/>
</dbReference>
<dbReference type="GO" id="GO:0005576">
    <property type="term" value="C:extracellular region"/>
    <property type="evidence" value="ECO:0007669"/>
    <property type="project" value="UniProtKB-SubCell"/>
</dbReference>
<dbReference type="GO" id="GO:0044220">
    <property type="term" value="C:host cell perinuclear region of cytoplasm"/>
    <property type="evidence" value="ECO:0007669"/>
    <property type="project" value="UniProtKB-SubCell"/>
</dbReference>
<dbReference type="GO" id="GO:0020002">
    <property type="term" value="C:host cell plasma membrane"/>
    <property type="evidence" value="ECO:0007669"/>
    <property type="project" value="UniProtKB-SubCell"/>
</dbReference>
<dbReference type="GO" id="GO:0016020">
    <property type="term" value="C:membrane"/>
    <property type="evidence" value="ECO:0007669"/>
    <property type="project" value="UniProtKB-KW"/>
</dbReference>
<dbReference type="GO" id="GO:0044423">
    <property type="term" value="C:virion component"/>
    <property type="evidence" value="ECO:0007669"/>
    <property type="project" value="UniProtKB-KW"/>
</dbReference>
<accession>P12481</accession>
<evidence type="ECO:0000250" key="1"/>
<evidence type="ECO:0000305" key="2"/>